<comment type="function">
    <text evidence="1">Part of a stress-induced multi-chaperone system, it is involved in the recovery of the cell from heat-induced damage, in cooperation with DnaK, DnaJ and GrpE. Acts before DnaK, in the processing of protein aggregates. Protein binding stimulates the ATPase activity; ATP hydrolysis unfolds the denatured protein aggregates, which probably helps expose new hydrophobic binding sites on the surface of ClpB-bound aggregates, contributing to the solubilization and refolding of denatured protein aggregates by DnaK (By similarity).</text>
</comment>
<comment type="subunit">
    <text evidence="1">Homohexamer. The oligomerization is ATP-dependent (By similarity).</text>
</comment>
<comment type="subcellular location">
    <subcellularLocation>
        <location evidence="4">Cytoplasm</location>
    </subcellularLocation>
</comment>
<comment type="domain">
    <text evidence="1">The Clp repeat (R) domain probably functions as a substrate-discriminating domain, recruiting aggregated proteins to the ClpB hexamer and/or stabilizing bound proteins. The NBD2 domain is responsible for oligomerization, whereas the NBD1 domain stabilizes the hexamer probably in an ATP-dependent manner. The movement of the coiled-coil domain is essential for ClpB ability to rescue proteins from an aggregated state, probably by pulling apart large aggregated proteins, which are bound between the coiled-coils motifs of adjacent ClpB subunits in the functional hexamer (By similarity).</text>
</comment>
<comment type="similarity">
    <text evidence="4">Belongs to the ClpA/ClpB family.</text>
</comment>
<feature type="chain" id="PRO_0000191182" description="Chaperone protein ClpB">
    <location>
        <begin position="1"/>
        <end position="869"/>
    </location>
</feature>
<feature type="domain" description="Clp R" evidence="2">
    <location>
        <begin position="3"/>
        <end position="145"/>
    </location>
</feature>
<feature type="region of interest" description="Repeat 1" evidence="2">
    <location>
        <begin position="6"/>
        <end position="71"/>
    </location>
</feature>
<feature type="region of interest" description="Repeat 2" evidence="2">
    <location>
        <begin position="85"/>
        <end position="145"/>
    </location>
</feature>
<feature type="region of interest" description="NBD1" evidence="1">
    <location>
        <begin position="158"/>
        <end position="339"/>
    </location>
</feature>
<feature type="region of interest" description="Linker" evidence="1">
    <location>
        <begin position="340"/>
        <end position="549"/>
    </location>
</feature>
<feature type="region of interest" description="Disordered" evidence="3">
    <location>
        <begin position="443"/>
        <end position="465"/>
    </location>
</feature>
<feature type="region of interest" description="NBD2" evidence="1">
    <location>
        <begin position="559"/>
        <end position="771"/>
    </location>
</feature>
<feature type="region of interest" description="C-terminal" evidence="1">
    <location>
        <begin position="772"/>
        <end position="869"/>
    </location>
</feature>
<feature type="coiled-coil region" evidence="1">
    <location>
        <begin position="390"/>
        <end position="524"/>
    </location>
</feature>
<feature type="binding site" evidence="1">
    <location>
        <begin position="205"/>
        <end position="212"/>
    </location>
    <ligand>
        <name>ATP</name>
        <dbReference type="ChEBI" id="CHEBI:30616"/>
        <label>1</label>
    </ligand>
</feature>
<feature type="binding site" evidence="1">
    <location>
        <begin position="609"/>
        <end position="616"/>
    </location>
    <ligand>
        <name>ATP</name>
        <dbReference type="ChEBI" id="CHEBI:30616"/>
        <label>2</label>
    </ligand>
</feature>
<reference key="1">
    <citation type="journal article" date="2005" name="J. Bacteriol.">
        <title>Insights on evolution of virulence and resistance from the complete genome analysis of an early methicillin-resistant Staphylococcus aureus strain and a biofilm-producing methicillin-resistant Staphylococcus epidermidis strain.</title>
        <authorList>
            <person name="Gill S.R."/>
            <person name="Fouts D.E."/>
            <person name="Archer G.L."/>
            <person name="Mongodin E.F."/>
            <person name="DeBoy R.T."/>
            <person name="Ravel J."/>
            <person name="Paulsen I.T."/>
            <person name="Kolonay J.F."/>
            <person name="Brinkac L.M."/>
            <person name="Beanan M.J."/>
            <person name="Dodson R.J."/>
            <person name="Daugherty S.C."/>
            <person name="Madupu R."/>
            <person name="Angiuoli S.V."/>
            <person name="Durkin A.S."/>
            <person name="Haft D.H."/>
            <person name="Vamathevan J.J."/>
            <person name="Khouri H."/>
            <person name="Utterback T.R."/>
            <person name="Lee C."/>
            <person name="Dimitrov G."/>
            <person name="Jiang L."/>
            <person name="Qin H."/>
            <person name="Weidman J."/>
            <person name="Tran K."/>
            <person name="Kang K.H."/>
            <person name="Hance I.R."/>
            <person name="Nelson K.E."/>
            <person name="Fraser C.M."/>
        </authorList>
    </citation>
    <scope>NUCLEOTIDE SEQUENCE [LARGE SCALE GENOMIC DNA]</scope>
    <source>
        <strain>ATCC 35984 / DSM 28319 / BCRC 17069 / CCUG 31568 / BM 3577 / RP62A</strain>
    </source>
</reference>
<proteinExistence type="inferred from homology"/>
<sequence>MDINQMTYAVQGALQKAVAYSKEYELQNIEVEALLKAAMNENDSLFKSILERANIDVDQLIKAYDNQLSHYPTVQGDNVQYGQYISAKTNELLDKAEKYMKSYEDEFISMEHILRAAIDTDETTQKWVGNKVEVIKEIITKVRGGNHVTSQNPEVNYEALEKYGRDLVEEVRQGKMDPVIGRDEEIRNTIRILSRKTKNNPVLIGEPGVGKTAIVEGLAQRIVRKDVPESLLDKTIFELDLSALVAGAKYRGEFEERLKAVLKEVKESEGRIILFIDEIHMLVGAGKTDGAMDAGNMLKPMLARGELHCIGATTLNEYREYIEKDSALERRFQKVGVSEPDVEDTISILRGLKERYEVYHGVRIQDRALVAAAELSDRYITDRFLPDKAIDLVDQACATIRTEMGSNPTELDQVNRRVMQLEIEESALKNESDNPSKHRLEELQEELSNEKEKQSSLKSRVEQEKEKIAKVQEKRAELDSSRQALEDAQTEGNLEKAAELQYGTIPQLEKELQKFEEAFQDETGEDSERMIREVVSDEEIGDIVSQWTGIPVSKLVETEREKLLSLSDILHKRVVGQDKAVDLVSDAVVRARAGIKDPNRPIGSFLFLGPTGVGKTELAKSLASSLFDSEKHMIRIDMSEYMEKHAVSRLIGAPPGYVGHDEGGQLTEAVRRNPYSVILLDEVEKAHSDVFNVLLQILDEGRLTDSKGRSVDFKNTIIIMTSNIGSQVLLENVKDAGEISDDTEKAVMDSLHAYFKPEILNRMDDIVLFKPLSVNDMSMIVDKILTQLNMRLLDQHISIEVTEEAKKWLGEEAYEPQFGARPLKRFVQRQIETPIARMMIKESLPEGTIIKVDLNDNKELDFKVVKPTS</sequence>
<evidence type="ECO:0000250" key="1"/>
<evidence type="ECO:0000255" key="2">
    <source>
        <dbReference type="PROSITE-ProRule" id="PRU01251"/>
    </source>
</evidence>
<evidence type="ECO:0000256" key="3">
    <source>
        <dbReference type="SAM" id="MobiDB-lite"/>
    </source>
</evidence>
<evidence type="ECO:0000305" key="4"/>
<organism>
    <name type="scientific">Staphylococcus epidermidis (strain ATCC 35984 / DSM 28319 / BCRC 17069 / CCUG 31568 / BM 3577 / RP62A)</name>
    <dbReference type="NCBI Taxonomy" id="176279"/>
    <lineage>
        <taxon>Bacteria</taxon>
        <taxon>Bacillati</taxon>
        <taxon>Bacillota</taxon>
        <taxon>Bacilli</taxon>
        <taxon>Bacillales</taxon>
        <taxon>Staphylococcaceae</taxon>
        <taxon>Staphylococcus</taxon>
    </lineage>
</organism>
<protein>
    <recommendedName>
        <fullName>Chaperone protein ClpB</fullName>
    </recommendedName>
</protein>
<keyword id="KW-0067">ATP-binding</keyword>
<keyword id="KW-0143">Chaperone</keyword>
<keyword id="KW-0175">Coiled coil</keyword>
<keyword id="KW-0963">Cytoplasm</keyword>
<keyword id="KW-0547">Nucleotide-binding</keyword>
<keyword id="KW-1185">Reference proteome</keyword>
<keyword id="KW-0677">Repeat</keyword>
<keyword id="KW-0346">Stress response</keyword>
<dbReference type="EMBL" id="CP000029">
    <property type="protein sequence ID" value="AAW53951.1"/>
    <property type="molecule type" value="Genomic_DNA"/>
</dbReference>
<dbReference type="RefSeq" id="WP_002486293.1">
    <property type="nucleotide sequence ID" value="NC_002976.3"/>
</dbReference>
<dbReference type="SMR" id="Q5HQI5"/>
<dbReference type="STRING" id="176279.SERP0564"/>
<dbReference type="KEGG" id="ser:SERP0564"/>
<dbReference type="eggNOG" id="COG0542">
    <property type="taxonomic scope" value="Bacteria"/>
</dbReference>
<dbReference type="HOGENOM" id="CLU_005070_4_0_9"/>
<dbReference type="Proteomes" id="UP000000531">
    <property type="component" value="Chromosome"/>
</dbReference>
<dbReference type="GO" id="GO:0005737">
    <property type="term" value="C:cytoplasm"/>
    <property type="evidence" value="ECO:0007669"/>
    <property type="project" value="UniProtKB-SubCell"/>
</dbReference>
<dbReference type="GO" id="GO:0005524">
    <property type="term" value="F:ATP binding"/>
    <property type="evidence" value="ECO:0007669"/>
    <property type="project" value="UniProtKB-KW"/>
</dbReference>
<dbReference type="GO" id="GO:0016887">
    <property type="term" value="F:ATP hydrolysis activity"/>
    <property type="evidence" value="ECO:0007669"/>
    <property type="project" value="InterPro"/>
</dbReference>
<dbReference type="GO" id="GO:0034605">
    <property type="term" value="P:cellular response to heat"/>
    <property type="evidence" value="ECO:0007669"/>
    <property type="project" value="TreeGrafter"/>
</dbReference>
<dbReference type="GO" id="GO:0042026">
    <property type="term" value="P:protein refolding"/>
    <property type="evidence" value="ECO:0007669"/>
    <property type="project" value="InterPro"/>
</dbReference>
<dbReference type="CDD" id="cd00009">
    <property type="entry name" value="AAA"/>
    <property type="match status" value="1"/>
</dbReference>
<dbReference type="CDD" id="cd19499">
    <property type="entry name" value="RecA-like_ClpB_Hsp104-like"/>
    <property type="match status" value="1"/>
</dbReference>
<dbReference type="FunFam" id="3.40.50.300:FF:000120">
    <property type="entry name" value="ATP-dependent chaperone ClpB"/>
    <property type="match status" value="1"/>
</dbReference>
<dbReference type="FunFam" id="3.40.50.300:FF:000025">
    <property type="entry name" value="ATP-dependent Clp protease subunit"/>
    <property type="match status" value="1"/>
</dbReference>
<dbReference type="FunFam" id="3.40.50.300:FF:000010">
    <property type="entry name" value="Chaperone clpB 1, putative"/>
    <property type="match status" value="1"/>
</dbReference>
<dbReference type="Gene3D" id="1.10.8.60">
    <property type="match status" value="1"/>
</dbReference>
<dbReference type="Gene3D" id="1.10.1780.10">
    <property type="entry name" value="Clp, N-terminal domain"/>
    <property type="match status" value="1"/>
</dbReference>
<dbReference type="Gene3D" id="3.40.50.300">
    <property type="entry name" value="P-loop containing nucleotide triphosphate hydrolases"/>
    <property type="match status" value="3"/>
</dbReference>
<dbReference type="InterPro" id="IPR003593">
    <property type="entry name" value="AAA+_ATPase"/>
</dbReference>
<dbReference type="InterPro" id="IPR003959">
    <property type="entry name" value="ATPase_AAA_core"/>
</dbReference>
<dbReference type="InterPro" id="IPR017730">
    <property type="entry name" value="Chaperonin_ClpB"/>
</dbReference>
<dbReference type="InterPro" id="IPR019489">
    <property type="entry name" value="Clp_ATPase_C"/>
</dbReference>
<dbReference type="InterPro" id="IPR036628">
    <property type="entry name" value="Clp_N_dom_sf"/>
</dbReference>
<dbReference type="InterPro" id="IPR004176">
    <property type="entry name" value="Clp_R_dom"/>
</dbReference>
<dbReference type="InterPro" id="IPR001270">
    <property type="entry name" value="ClpA/B"/>
</dbReference>
<dbReference type="InterPro" id="IPR018368">
    <property type="entry name" value="ClpA/B_CS1"/>
</dbReference>
<dbReference type="InterPro" id="IPR028299">
    <property type="entry name" value="ClpA/B_CS2"/>
</dbReference>
<dbReference type="InterPro" id="IPR041546">
    <property type="entry name" value="ClpA/ClpB_AAA_lid"/>
</dbReference>
<dbReference type="InterPro" id="IPR050130">
    <property type="entry name" value="ClpA_ClpB"/>
</dbReference>
<dbReference type="InterPro" id="IPR027417">
    <property type="entry name" value="P-loop_NTPase"/>
</dbReference>
<dbReference type="NCBIfam" id="TIGR03346">
    <property type="entry name" value="chaperone_ClpB"/>
    <property type="match status" value="1"/>
</dbReference>
<dbReference type="PANTHER" id="PTHR11638">
    <property type="entry name" value="ATP-DEPENDENT CLP PROTEASE"/>
    <property type="match status" value="1"/>
</dbReference>
<dbReference type="PANTHER" id="PTHR11638:SF18">
    <property type="entry name" value="HEAT SHOCK PROTEIN 104"/>
    <property type="match status" value="1"/>
</dbReference>
<dbReference type="Pfam" id="PF00004">
    <property type="entry name" value="AAA"/>
    <property type="match status" value="1"/>
</dbReference>
<dbReference type="Pfam" id="PF07724">
    <property type="entry name" value="AAA_2"/>
    <property type="match status" value="1"/>
</dbReference>
<dbReference type="Pfam" id="PF17871">
    <property type="entry name" value="AAA_lid_9"/>
    <property type="match status" value="1"/>
</dbReference>
<dbReference type="Pfam" id="PF02861">
    <property type="entry name" value="Clp_N"/>
    <property type="match status" value="2"/>
</dbReference>
<dbReference type="Pfam" id="PF10431">
    <property type="entry name" value="ClpB_D2-small"/>
    <property type="match status" value="1"/>
</dbReference>
<dbReference type="PRINTS" id="PR00300">
    <property type="entry name" value="CLPPROTEASEA"/>
</dbReference>
<dbReference type="SMART" id="SM00382">
    <property type="entry name" value="AAA"/>
    <property type="match status" value="2"/>
</dbReference>
<dbReference type="SMART" id="SM01086">
    <property type="entry name" value="ClpB_D2-small"/>
    <property type="match status" value="1"/>
</dbReference>
<dbReference type="SUPFAM" id="SSF81923">
    <property type="entry name" value="Double Clp-N motif"/>
    <property type="match status" value="1"/>
</dbReference>
<dbReference type="SUPFAM" id="SSF52540">
    <property type="entry name" value="P-loop containing nucleoside triphosphate hydrolases"/>
    <property type="match status" value="2"/>
</dbReference>
<dbReference type="PROSITE" id="PS51903">
    <property type="entry name" value="CLP_R"/>
    <property type="match status" value="1"/>
</dbReference>
<dbReference type="PROSITE" id="PS00870">
    <property type="entry name" value="CLPAB_1"/>
    <property type="match status" value="1"/>
</dbReference>
<dbReference type="PROSITE" id="PS00871">
    <property type="entry name" value="CLPAB_2"/>
    <property type="match status" value="1"/>
</dbReference>
<accession>Q5HQI5</accession>
<gene>
    <name type="primary">clpB</name>
    <name type="ordered locus">SERP0564</name>
</gene>
<name>CLPB_STAEQ</name>